<proteinExistence type="inferred from homology"/>
<organism>
    <name type="scientific">Methanococcoides burtonii (strain DSM 6242 / NBRC 107633 / OCM 468 / ACE-M)</name>
    <dbReference type="NCBI Taxonomy" id="259564"/>
    <lineage>
        <taxon>Archaea</taxon>
        <taxon>Methanobacteriati</taxon>
        <taxon>Methanobacteriota</taxon>
        <taxon>Stenosarchaea group</taxon>
        <taxon>Methanomicrobia</taxon>
        <taxon>Methanosarcinales</taxon>
        <taxon>Methanosarcinaceae</taxon>
        <taxon>Methanococcoides</taxon>
    </lineage>
</organism>
<sequence length="569" mass="64987">MTLSDEDKITIEKFALQNAVKYGKAPQLGAVMGKVMGLCPHLRPLSKEVGPVIQHVLDEVMKEVPEEWQARLEVIAPELIEELNTKKEPDKGLKPLDVKEGESVVMRFAPNPNGPPTLGSTRGIVVNSEYVKRYGGKFIIRFDDTDPQTKRPMLEAYDWYLEDCEWLDAKPDEVVIASDNMEVYYDYARQLLEMGHAYVCFCEGGDFKKFKDAKEPCPHRGHAPEVNLEHWDKMLAGEYEEKAAVVRIKTDIEHKDPAMRDFGAFRIVKTAHPRPEVDDKYVVWPLLDFEGAIEDHVLGMTHIIRGKDLMDSEKRQGYIYNYLGWEYPKTTHWGRVKMHEFGKFSTSGLRQSIEDGEYSGWDDPRLPTLRALRRRGIKPEAIRKFMIDMGVGETDVSLSMDTLYAENRKIIDTIANRYFFVWDPVELEVEDAVCCTVNPSLHPSEDRGVRCIDIGSKLLVCKSDVESAELGDMLRMKYLYNIEITSVSPLKCKCIGDSMEDAKSNKMRIIHWVPEDGIPVKVLAPQGEFIGMGEKQIVDELDNVVQFERFGFCRIDSVDDGVVAYFTHK</sequence>
<name>SYE_METBU</name>
<protein>
    <recommendedName>
        <fullName evidence="1">Glutamate--tRNA ligase</fullName>
        <ecNumber evidence="1">6.1.1.17</ecNumber>
    </recommendedName>
    <alternativeName>
        <fullName evidence="1">Glutamyl-tRNA synthetase</fullName>
        <shortName evidence="1">GluRS</shortName>
    </alternativeName>
</protein>
<accession>Q12TN7</accession>
<comment type="function">
    <text evidence="1">Catalyzes the attachment of glutamate to tRNA(Glu) in a two-step reaction: glutamate is first activated by ATP to form Glu-AMP and then transferred to the acceptor end of tRNA(Glu).</text>
</comment>
<comment type="catalytic activity">
    <reaction evidence="1">
        <text>tRNA(Glu) + L-glutamate + ATP = L-glutamyl-tRNA(Glu) + AMP + diphosphate</text>
        <dbReference type="Rhea" id="RHEA:23540"/>
        <dbReference type="Rhea" id="RHEA-COMP:9663"/>
        <dbReference type="Rhea" id="RHEA-COMP:9680"/>
        <dbReference type="ChEBI" id="CHEBI:29985"/>
        <dbReference type="ChEBI" id="CHEBI:30616"/>
        <dbReference type="ChEBI" id="CHEBI:33019"/>
        <dbReference type="ChEBI" id="CHEBI:78442"/>
        <dbReference type="ChEBI" id="CHEBI:78520"/>
        <dbReference type="ChEBI" id="CHEBI:456215"/>
        <dbReference type="EC" id="6.1.1.17"/>
    </reaction>
</comment>
<comment type="subcellular location">
    <subcellularLocation>
        <location evidence="1">Cytoplasm</location>
    </subcellularLocation>
</comment>
<comment type="similarity">
    <text evidence="1">Belongs to the class-I aminoacyl-tRNA synthetase family. Glutamate--tRNA ligase type 2 subfamily.</text>
</comment>
<feature type="chain" id="PRO_1000001922" description="Glutamate--tRNA ligase">
    <location>
        <begin position="1"/>
        <end position="569"/>
    </location>
</feature>
<feature type="short sequence motif" description="'HIGH' region" evidence="1">
    <location>
        <begin position="110"/>
        <end position="120"/>
    </location>
</feature>
<reference key="1">
    <citation type="journal article" date="2009" name="ISME J.">
        <title>The genome sequence of the psychrophilic archaeon, Methanococcoides burtonii: the role of genome evolution in cold adaptation.</title>
        <authorList>
            <person name="Allen M.A."/>
            <person name="Lauro F.M."/>
            <person name="Williams T.J."/>
            <person name="Burg D."/>
            <person name="Siddiqui K.S."/>
            <person name="De Francisci D."/>
            <person name="Chong K.W."/>
            <person name="Pilak O."/>
            <person name="Chew H.H."/>
            <person name="De Maere M.Z."/>
            <person name="Ting L."/>
            <person name="Katrib M."/>
            <person name="Ng C."/>
            <person name="Sowers K.R."/>
            <person name="Galperin M.Y."/>
            <person name="Anderson I.J."/>
            <person name="Ivanova N."/>
            <person name="Dalin E."/>
            <person name="Martinez M."/>
            <person name="Lapidus A."/>
            <person name="Hauser L."/>
            <person name="Land M."/>
            <person name="Thomas T."/>
            <person name="Cavicchioli R."/>
        </authorList>
    </citation>
    <scope>NUCLEOTIDE SEQUENCE [LARGE SCALE GENOMIC DNA]</scope>
    <source>
        <strain>DSM 6242 / NBRC 107633 / OCM 468 / ACE-M</strain>
    </source>
</reference>
<dbReference type="EC" id="6.1.1.17" evidence="1"/>
<dbReference type="EMBL" id="CP000300">
    <property type="protein sequence ID" value="ABE53189.1"/>
    <property type="molecule type" value="Genomic_DNA"/>
</dbReference>
<dbReference type="RefSeq" id="WP_011500324.1">
    <property type="nucleotide sequence ID" value="NC_007955.1"/>
</dbReference>
<dbReference type="SMR" id="Q12TN7"/>
<dbReference type="STRING" id="259564.Mbur_2335"/>
<dbReference type="GeneID" id="3998916"/>
<dbReference type="KEGG" id="mbu:Mbur_2335"/>
<dbReference type="HOGENOM" id="CLU_001882_1_3_2"/>
<dbReference type="OrthoDB" id="10470at2157"/>
<dbReference type="Proteomes" id="UP000001979">
    <property type="component" value="Chromosome"/>
</dbReference>
<dbReference type="GO" id="GO:0005829">
    <property type="term" value="C:cytosol"/>
    <property type="evidence" value="ECO:0007669"/>
    <property type="project" value="TreeGrafter"/>
</dbReference>
<dbReference type="GO" id="GO:0005524">
    <property type="term" value="F:ATP binding"/>
    <property type="evidence" value="ECO:0007669"/>
    <property type="project" value="UniProtKB-UniRule"/>
</dbReference>
<dbReference type="GO" id="GO:0004818">
    <property type="term" value="F:glutamate-tRNA ligase activity"/>
    <property type="evidence" value="ECO:0007669"/>
    <property type="project" value="UniProtKB-UniRule"/>
</dbReference>
<dbReference type="GO" id="GO:0043604">
    <property type="term" value="P:amide biosynthetic process"/>
    <property type="evidence" value="ECO:0007669"/>
    <property type="project" value="TreeGrafter"/>
</dbReference>
<dbReference type="GO" id="GO:0006424">
    <property type="term" value="P:glutamyl-tRNA aminoacylation"/>
    <property type="evidence" value="ECO:0007669"/>
    <property type="project" value="UniProtKB-UniRule"/>
</dbReference>
<dbReference type="CDD" id="cd09287">
    <property type="entry name" value="GluRS_non_core"/>
    <property type="match status" value="1"/>
</dbReference>
<dbReference type="FunFam" id="3.40.50.620:FF:000222">
    <property type="entry name" value="Glutamate--tRNA ligase"/>
    <property type="match status" value="1"/>
</dbReference>
<dbReference type="Gene3D" id="2.40.240.100">
    <property type="match status" value="1"/>
</dbReference>
<dbReference type="Gene3D" id="3.40.50.620">
    <property type="entry name" value="HUPs"/>
    <property type="match status" value="1"/>
</dbReference>
<dbReference type="Gene3D" id="2.40.240.10">
    <property type="entry name" value="Ribosomal Protein L25, Chain P"/>
    <property type="match status" value="1"/>
</dbReference>
<dbReference type="HAMAP" id="MF_02076">
    <property type="entry name" value="Glu_tRNA_synth_type2"/>
    <property type="match status" value="1"/>
</dbReference>
<dbReference type="InterPro" id="IPR050132">
    <property type="entry name" value="Gln/Glu-tRNA_Ligase"/>
</dbReference>
<dbReference type="InterPro" id="IPR004526">
    <property type="entry name" value="Glu-tRNA-synth_arc/euk"/>
</dbReference>
<dbReference type="InterPro" id="IPR000924">
    <property type="entry name" value="Glu/Gln-tRNA-synth"/>
</dbReference>
<dbReference type="InterPro" id="IPR020058">
    <property type="entry name" value="Glu/Gln-tRNA-synth_Ib_cat-dom"/>
</dbReference>
<dbReference type="InterPro" id="IPR020059">
    <property type="entry name" value="Glu/Gln-tRNA-synth_Ib_codon-bd"/>
</dbReference>
<dbReference type="InterPro" id="IPR020056">
    <property type="entry name" value="Rbsml_bL25/Gln-tRNA_synth_N"/>
</dbReference>
<dbReference type="InterPro" id="IPR011035">
    <property type="entry name" value="Ribosomal_bL25/Gln-tRNA_synth"/>
</dbReference>
<dbReference type="InterPro" id="IPR014729">
    <property type="entry name" value="Rossmann-like_a/b/a_fold"/>
</dbReference>
<dbReference type="InterPro" id="IPR049437">
    <property type="entry name" value="tRNA-synt_1c_C2"/>
</dbReference>
<dbReference type="NCBIfam" id="TIGR00463">
    <property type="entry name" value="gltX_arch"/>
    <property type="match status" value="1"/>
</dbReference>
<dbReference type="NCBIfam" id="NF003169">
    <property type="entry name" value="PRK04156.1"/>
    <property type="match status" value="1"/>
</dbReference>
<dbReference type="PANTHER" id="PTHR43097:SF5">
    <property type="entry name" value="GLUTAMATE--TRNA LIGASE"/>
    <property type="match status" value="1"/>
</dbReference>
<dbReference type="PANTHER" id="PTHR43097">
    <property type="entry name" value="GLUTAMINE-TRNA LIGASE"/>
    <property type="match status" value="1"/>
</dbReference>
<dbReference type="Pfam" id="PF00749">
    <property type="entry name" value="tRNA-synt_1c"/>
    <property type="match status" value="1"/>
</dbReference>
<dbReference type="Pfam" id="PF03950">
    <property type="entry name" value="tRNA-synt_1c_C"/>
    <property type="match status" value="1"/>
</dbReference>
<dbReference type="Pfam" id="PF20974">
    <property type="entry name" value="tRNA-synt_1c_C2"/>
    <property type="match status" value="1"/>
</dbReference>
<dbReference type="PRINTS" id="PR00987">
    <property type="entry name" value="TRNASYNTHGLU"/>
</dbReference>
<dbReference type="SUPFAM" id="SSF52374">
    <property type="entry name" value="Nucleotidylyl transferase"/>
    <property type="match status" value="1"/>
</dbReference>
<dbReference type="SUPFAM" id="SSF50715">
    <property type="entry name" value="Ribosomal protein L25-like"/>
    <property type="match status" value="1"/>
</dbReference>
<keyword id="KW-0030">Aminoacyl-tRNA synthetase</keyword>
<keyword id="KW-0067">ATP-binding</keyword>
<keyword id="KW-0963">Cytoplasm</keyword>
<keyword id="KW-0436">Ligase</keyword>
<keyword id="KW-0547">Nucleotide-binding</keyword>
<keyword id="KW-0648">Protein biosynthesis</keyword>
<evidence type="ECO:0000255" key="1">
    <source>
        <dbReference type="HAMAP-Rule" id="MF_02076"/>
    </source>
</evidence>
<gene>
    <name evidence="1" type="primary">gltX</name>
    <name type="ordered locus">Mbur_2335</name>
</gene>